<accession>Q6G6B9</accession>
<dbReference type="EC" id="2.3.1.-"/>
<dbReference type="EMBL" id="BX571857">
    <property type="protein sequence ID" value="CAG44257.1"/>
    <property type="molecule type" value="Genomic_DNA"/>
</dbReference>
<dbReference type="RefSeq" id="WP_000136500.1">
    <property type="nucleotide sequence ID" value="NC_002953.3"/>
</dbReference>
<dbReference type="SMR" id="Q6G6B9"/>
<dbReference type="KEGG" id="sas:SAS2441"/>
<dbReference type="HOGENOM" id="CLU_051638_3_0_9"/>
<dbReference type="GO" id="GO:0008870">
    <property type="term" value="F:galactoside O-acetyltransferase activity"/>
    <property type="evidence" value="ECO:0007669"/>
    <property type="project" value="TreeGrafter"/>
</dbReference>
<dbReference type="CDD" id="cd03357">
    <property type="entry name" value="LbH_MAT_GAT"/>
    <property type="match status" value="1"/>
</dbReference>
<dbReference type="FunFam" id="2.160.10.10:FF:000008">
    <property type="entry name" value="Maltose O-acetyltransferase"/>
    <property type="match status" value="1"/>
</dbReference>
<dbReference type="Gene3D" id="2.160.10.10">
    <property type="entry name" value="Hexapeptide repeat proteins"/>
    <property type="match status" value="1"/>
</dbReference>
<dbReference type="InterPro" id="IPR001451">
    <property type="entry name" value="Hexapep"/>
</dbReference>
<dbReference type="InterPro" id="IPR039369">
    <property type="entry name" value="LacA-like"/>
</dbReference>
<dbReference type="InterPro" id="IPR024688">
    <property type="entry name" value="Mac_dom"/>
</dbReference>
<dbReference type="InterPro" id="IPR011004">
    <property type="entry name" value="Trimer_LpxA-like_sf"/>
</dbReference>
<dbReference type="PANTHER" id="PTHR43017:SF1">
    <property type="entry name" value="ACETYLTRANSFERASE YJL218W-RELATED"/>
    <property type="match status" value="1"/>
</dbReference>
<dbReference type="PANTHER" id="PTHR43017">
    <property type="entry name" value="GALACTOSIDE O-ACETYLTRANSFERASE"/>
    <property type="match status" value="1"/>
</dbReference>
<dbReference type="Pfam" id="PF00132">
    <property type="entry name" value="Hexapep"/>
    <property type="match status" value="1"/>
</dbReference>
<dbReference type="Pfam" id="PF14602">
    <property type="entry name" value="Hexapep_2"/>
    <property type="match status" value="1"/>
</dbReference>
<dbReference type="Pfam" id="PF12464">
    <property type="entry name" value="Mac"/>
    <property type="match status" value="1"/>
</dbReference>
<dbReference type="SMART" id="SM01266">
    <property type="entry name" value="Mac"/>
    <property type="match status" value="1"/>
</dbReference>
<dbReference type="SUPFAM" id="SSF51161">
    <property type="entry name" value="Trimeric LpxA-like enzymes"/>
    <property type="match status" value="1"/>
</dbReference>
<keyword id="KW-0012">Acyltransferase</keyword>
<keyword id="KW-0677">Repeat</keyword>
<keyword id="KW-0808">Transferase</keyword>
<reference key="1">
    <citation type="journal article" date="2004" name="Proc. Natl. Acad. Sci. U.S.A.">
        <title>Complete genomes of two clinical Staphylococcus aureus strains: evidence for the rapid evolution of virulence and drug resistance.</title>
        <authorList>
            <person name="Holden M.T.G."/>
            <person name="Feil E.J."/>
            <person name="Lindsay J.A."/>
            <person name="Peacock S.J."/>
            <person name="Day N.P.J."/>
            <person name="Enright M.C."/>
            <person name="Foster T.J."/>
            <person name="Moore C.E."/>
            <person name="Hurst L."/>
            <person name="Atkin R."/>
            <person name="Barron A."/>
            <person name="Bason N."/>
            <person name="Bentley S.D."/>
            <person name="Chillingworth C."/>
            <person name="Chillingworth T."/>
            <person name="Churcher C."/>
            <person name="Clark L."/>
            <person name="Corton C."/>
            <person name="Cronin A."/>
            <person name="Doggett J."/>
            <person name="Dowd L."/>
            <person name="Feltwell T."/>
            <person name="Hance Z."/>
            <person name="Harris B."/>
            <person name="Hauser H."/>
            <person name="Holroyd S."/>
            <person name="Jagels K."/>
            <person name="James K.D."/>
            <person name="Lennard N."/>
            <person name="Line A."/>
            <person name="Mayes R."/>
            <person name="Moule S."/>
            <person name="Mungall K."/>
            <person name="Ormond D."/>
            <person name="Quail M.A."/>
            <person name="Rabbinowitsch E."/>
            <person name="Rutherford K.M."/>
            <person name="Sanders M."/>
            <person name="Sharp S."/>
            <person name="Simmonds M."/>
            <person name="Stevens K."/>
            <person name="Whitehead S."/>
            <person name="Barrell B.G."/>
            <person name="Spratt B.G."/>
            <person name="Parkhill J."/>
        </authorList>
    </citation>
    <scope>NUCLEOTIDE SEQUENCE [LARGE SCALE GENOMIC DNA]</scope>
    <source>
        <strain>MSSA476</strain>
    </source>
</reference>
<gene>
    <name type="ordered locus">SAS2441</name>
</gene>
<protein>
    <recommendedName>
        <fullName>Putative acetyltransferase SAS2441</fullName>
        <ecNumber>2.3.1.-</ecNumber>
    </recommendedName>
</protein>
<sequence>MTEKEKMLAEKWYDANFDQYLINERARAKDICFELNHTRPSATNKRKELIDQLFQTTTDNVSISIPFDTDYGWNVKLGKNVYVNTNCYFMDGGQITIGDNVFIGPNCGFYTATHPLNFHHRNEGFEKAGPIHIGSNTWFGGHVAVLPGVTIGEGSVIGAGSVVTKDIPPHSLAVGNPCKVVRKIDNDLPSETLNDETIK</sequence>
<evidence type="ECO:0000305" key="1"/>
<name>ATRF2_STAAS</name>
<organism>
    <name type="scientific">Staphylococcus aureus (strain MSSA476)</name>
    <dbReference type="NCBI Taxonomy" id="282459"/>
    <lineage>
        <taxon>Bacteria</taxon>
        <taxon>Bacillati</taxon>
        <taxon>Bacillota</taxon>
        <taxon>Bacilli</taxon>
        <taxon>Bacillales</taxon>
        <taxon>Staphylococcaceae</taxon>
        <taxon>Staphylococcus</taxon>
    </lineage>
</organism>
<proteinExistence type="inferred from homology"/>
<comment type="similarity">
    <text evidence="1">Belongs to the transferase hexapeptide repeat family.</text>
</comment>
<feature type="chain" id="PRO_0000068756" description="Putative acetyltransferase SAS2441">
    <location>
        <begin position="1"/>
        <end position="199"/>
    </location>
</feature>